<keyword id="KW-0067">ATP-binding</keyword>
<keyword id="KW-0963">Cytoplasm</keyword>
<keyword id="KW-1015">Disulfide bond</keyword>
<keyword id="KW-0547">Nucleotide-binding</keyword>
<keyword id="KW-0694">RNA-binding</keyword>
<keyword id="KW-0808">Transferase</keyword>
<keyword id="KW-0819">tRNA processing</keyword>
<keyword id="KW-0820">tRNA-binding</keyword>
<dbReference type="EC" id="2.8.1.13" evidence="1"/>
<dbReference type="EMBL" id="CP000580">
    <property type="protein sequence ID" value="ABN97644.1"/>
    <property type="molecule type" value="Genomic_DNA"/>
</dbReference>
<dbReference type="SMR" id="A3PXL7"/>
<dbReference type="KEGG" id="mjl:Mjls_1856"/>
<dbReference type="HOGENOM" id="CLU_035188_0_2_11"/>
<dbReference type="BioCyc" id="MSP164757:G1G8C-1873-MONOMER"/>
<dbReference type="GO" id="GO:0005737">
    <property type="term" value="C:cytoplasm"/>
    <property type="evidence" value="ECO:0007669"/>
    <property type="project" value="UniProtKB-SubCell"/>
</dbReference>
<dbReference type="GO" id="GO:0005524">
    <property type="term" value="F:ATP binding"/>
    <property type="evidence" value="ECO:0007669"/>
    <property type="project" value="UniProtKB-KW"/>
</dbReference>
<dbReference type="GO" id="GO:0000049">
    <property type="term" value="F:tRNA binding"/>
    <property type="evidence" value="ECO:0007669"/>
    <property type="project" value="UniProtKB-KW"/>
</dbReference>
<dbReference type="GO" id="GO:0103016">
    <property type="term" value="F:tRNA-uridine 2-sulfurtransferase activity"/>
    <property type="evidence" value="ECO:0007669"/>
    <property type="project" value="UniProtKB-EC"/>
</dbReference>
<dbReference type="GO" id="GO:0002143">
    <property type="term" value="P:tRNA wobble position uridine thiolation"/>
    <property type="evidence" value="ECO:0007669"/>
    <property type="project" value="TreeGrafter"/>
</dbReference>
<dbReference type="CDD" id="cd01998">
    <property type="entry name" value="MnmA_TRMU-like"/>
    <property type="match status" value="1"/>
</dbReference>
<dbReference type="FunFam" id="3.40.50.620:FF:000057">
    <property type="entry name" value="tRNA-specific 2-thiouridylase MnmA"/>
    <property type="match status" value="1"/>
</dbReference>
<dbReference type="Gene3D" id="2.30.30.280">
    <property type="entry name" value="Adenine nucleotide alpha hydrolases-like domains"/>
    <property type="match status" value="1"/>
</dbReference>
<dbReference type="Gene3D" id="3.40.50.620">
    <property type="entry name" value="HUPs"/>
    <property type="match status" value="1"/>
</dbReference>
<dbReference type="Gene3D" id="2.40.30.10">
    <property type="entry name" value="Translation factors"/>
    <property type="match status" value="1"/>
</dbReference>
<dbReference type="HAMAP" id="MF_00144">
    <property type="entry name" value="tRNA_thiouridyl_MnmA"/>
    <property type="match status" value="1"/>
</dbReference>
<dbReference type="InterPro" id="IPR004506">
    <property type="entry name" value="MnmA-like"/>
</dbReference>
<dbReference type="InterPro" id="IPR046885">
    <property type="entry name" value="MnmA-like_C"/>
</dbReference>
<dbReference type="InterPro" id="IPR046884">
    <property type="entry name" value="MnmA-like_central"/>
</dbReference>
<dbReference type="InterPro" id="IPR023382">
    <property type="entry name" value="MnmA-like_central_sf"/>
</dbReference>
<dbReference type="InterPro" id="IPR014729">
    <property type="entry name" value="Rossmann-like_a/b/a_fold"/>
</dbReference>
<dbReference type="NCBIfam" id="NF001138">
    <property type="entry name" value="PRK00143.1"/>
    <property type="match status" value="1"/>
</dbReference>
<dbReference type="NCBIfam" id="TIGR00420">
    <property type="entry name" value="trmU"/>
    <property type="match status" value="1"/>
</dbReference>
<dbReference type="PANTHER" id="PTHR11933:SF5">
    <property type="entry name" value="MITOCHONDRIAL TRNA-SPECIFIC 2-THIOURIDYLASE 1"/>
    <property type="match status" value="1"/>
</dbReference>
<dbReference type="PANTHER" id="PTHR11933">
    <property type="entry name" value="TRNA 5-METHYLAMINOMETHYL-2-THIOURIDYLATE -METHYLTRANSFERASE"/>
    <property type="match status" value="1"/>
</dbReference>
<dbReference type="Pfam" id="PF03054">
    <property type="entry name" value="tRNA_Me_trans"/>
    <property type="match status" value="1"/>
</dbReference>
<dbReference type="Pfam" id="PF20258">
    <property type="entry name" value="tRNA_Me_trans_C"/>
    <property type="match status" value="1"/>
</dbReference>
<dbReference type="Pfam" id="PF20259">
    <property type="entry name" value="tRNA_Me_trans_M"/>
    <property type="match status" value="1"/>
</dbReference>
<dbReference type="SUPFAM" id="SSF52402">
    <property type="entry name" value="Adenine nucleotide alpha hydrolases-like"/>
    <property type="match status" value="1"/>
</dbReference>
<feature type="chain" id="PRO_1000009541" description="tRNA-specific 2-thiouridylase MnmA">
    <location>
        <begin position="1"/>
        <end position="359"/>
    </location>
</feature>
<feature type="region of interest" description="Interaction with tRNA" evidence="1">
    <location>
        <begin position="143"/>
        <end position="145"/>
    </location>
</feature>
<feature type="active site" description="Nucleophile" evidence="1">
    <location>
        <position position="101"/>
    </location>
</feature>
<feature type="active site" description="Cysteine persulfide intermediate" evidence="1">
    <location>
        <position position="193"/>
    </location>
</feature>
<feature type="binding site" evidence="1">
    <location>
        <begin position="6"/>
        <end position="13"/>
    </location>
    <ligand>
        <name>ATP</name>
        <dbReference type="ChEBI" id="CHEBI:30616"/>
    </ligand>
</feature>
<feature type="binding site" evidence="1">
    <location>
        <position position="32"/>
    </location>
    <ligand>
        <name>ATP</name>
        <dbReference type="ChEBI" id="CHEBI:30616"/>
    </ligand>
</feature>
<feature type="binding site" evidence="1">
    <location>
        <position position="125"/>
    </location>
    <ligand>
        <name>ATP</name>
        <dbReference type="ChEBI" id="CHEBI:30616"/>
    </ligand>
</feature>
<feature type="site" description="Interaction with tRNA" evidence="1">
    <location>
        <position position="126"/>
    </location>
</feature>
<feature type="site" description="Interaction with tRNA" evidence="1">
    <location>
        <position position="333"/>
    </location>
</feature>
<feature type="disulfide bond" description="Alternate" evidence="1">
    <location>
        <begin position="101"/>
        <end position="193"/>
    </location>
</feature>
<proteinExistence type="inferred from homology"/>
<comment type="function">
    <text evidence="1">Catalyzes the 2-thiolation of uridine at the wobble position (U34) of tRNA, leading to the formation of s(2)U34.</text>
</comment>
<comment type="catalytic activity">
    <reaction evidence="1">
        <text>S-sulfanyl-L-cysteinyl-[protein] + uridine(34) in tRNA + AH2 + ATP = 2-thiouridine(34) in tRNA + L-cysteinyl-[protein] + A + AMP + diphosphate + H(+)</text>
        <dbReference type="Rhea" id="RHEA:47032"/>
        <dbReference type="Rhea" id="RHEA-COMP:10131"/>
        <dbReference type="Rhea" id="RHEA-COMP:11726"/>
        <dbReference type="Rhea" id="RHEA-COMP:11727"/>
        <dbReference type="Rhea" id="RHEA-COMP:11728"/>
        <dbReference type="ChEBI" id="CHEBI:13193"/>
        <dbReference type="ChEBI" id="CHEBI:15378"/>
        <dbReference type="ChEBI" id="CHEBI:17499"/>
        <dbReference type="ChEBI" id="CHEBI:29950"/>
        <dbReference type="ChEBI" id="CHEBI:30616"/>
        <dbReference type="ChEBI" id="CHEBI:33019"/>
        <dbReference type="ChEBI" id="CHEBI:61963"/>
        <dbReference type="ChEBI" id="CHEBI:65315"/>
        <dbReference type="ChEBI" id="CHEBI:87170"/>
        <dbReference type="ChEBI" id="CHEBI:456215"/>
        <dbReference type="EC" id="2.8.1.13"/>
    </reaction>
</comment>
<comment type="subcellular location">
    <subcellularLocation>
        <location evidence="1">Cytoplasm</location>
    </subcellularLocation>
</comment>
<comment type="similarity">
    <text evidence="1">Belongs to the MnmA/TRMU family.</text>
</comment>
<reference key="1">
    <citation type="submission" date="2007-02" db="EMBL/GenBank/DDBJ databases">
        <title>Complete sequence of Mycobacterium sp. JLS.</title>
        <authorList>
            <consortium name="US DOE Joint Genome Institute"/>
            <person name="Copeland A."/>
            <person name="Lucas S."/>
            <person name="Lapidus A."/>
            <person name="Barry K."/>
            <person name="Detter J.C."/>
            <person name="Glavina del Rio T."/>
            <person name="Hammon N."/>
            <person name="Israni S."/>
            <person name="Dalin E."/>
            <person name="Tice H."/>
            <person name="Pitluck S."/>
            <person name="Chain P."/>
            <person name="Malfatti S."/>
            <person name="Shin M."/>
            <person name="Vergez L."/>
            <person name="Schmutz J."/>
            <person name="Larimer F."/>
            <person name="Land M."/>
            <person name="Hauser L."/>
            <person name="Kyrpides N."/>
            <person name="Mikhailova N."/>
            <person name="Miller C.D."/>
            <person name="Anderson A.J."/>
            <person name="Sims R.C."/>
            <person name="Richardson P."/>
        </authorList>
    </citation>
    <scope>NUCLEOTIDE SEQUENCE [LARGE SCALE GENOMIC DNA]</scope>
    <source>
        <strain>JLS</strain>
    </source>
</reference>
<organism>
    <name type="scientific">Mycobacterium sp. (strain JLS)</name>
    <dbReference type="NCBI Taxonomy" id="164757"/>
    <lineage>
        <taxon>Bacteria</taxon>
        <taxon>Bacillati</taxon>
        <taxon>Actinomycetota</taxon>
        <taxon>Actinomycetes</taxon>
        <taxon>Mycobacteriales</taxon>
        <taxon>Mycobacteriaceae</taxon>
        <taxon>Mycobacterium</taxon>
    </lineage>
</organism>
<sequence length="359" mass="37351">MRVLVAMSGGVDSSVAAARMVDAGHDVVGVHLALSATPGTLRTGSRGCCSKEDAGDARRVADVLDIPFYVWDFADRFKEDVIDDFVASYERGETPNPCVRCNEKIKFSALAGRALALGFDALATGHYARLSDGRLRRAVDADKDQSYVLAVLTAQQLRHAVFPIGDTPKAQIRAEAAERGLAVADKPDSHDICFIPSGDTRAFLGARIGVRRGAVVDAGGTKLAEHEGVHGFTIGQRKGLGIAGPGPDGQPRYVTGIDAATGTVRVGGAEDLDVSRLTGERPVFTSGAAFGGPVECQVQVRAHGGLADAVASHDAGVLSVELRAPLRGVAAGQTMVIYRPDPEGDEVLASATISGAAGR</sequence>
<name>MNMA_MYCSJ</name>
<evidence type="ECO:0000255" key="1">
    <source>
        <dbReference type="HAMAP-Rule" id="MF_00144"/>
    </source>
</evidence>
<accession>A3PXL7</accession>
<gene>
    <name evidence="1" type="primary">mnmA</name>
    <name type="synonym">trmU</name>
    <name type="ordered locus">Mjls_1856</name>
</gene>
<protein>
    <recommendedName>
        <fullName evidence="1">tRNA-specific 2-thiouridylase MnmA</fullName>
        <ecNumber evidence="1">2.8.1.13</ecNumber>
    </recommendedName>
</protein>